<reference key="1">
    <citation type="journal article" date="2000" name="DNA Res.">
        <title>Complete genome structure of the nitrogen-fixing symbiotic bacterium Mesorhizobium loti.</title>
        <authorList>
            <person name="Kaneko T."/>
            <person name="Nakamura Y."/>
            <person name="Sato S."/>
            <person name="Asamizu E."/>
            <person name="Kato T."/>
            <person name="Sasamoto S."/>
            <person name="Watanabe A."/>
            <person name="Idesawa K."/>
            <person name="Ishikawa A."/>
            <person name="Kawashima K."/>
            <person name="Kimura T."/>
            <person name="Kishida Y."/>
            <person name="Kiyokawa C."/>
            <person name="Kohara M."/>
            <person name="Matsumoto M."/>
            <person name="Matsuno A."/>
            <person name="Mochizuki Y."/>
            <person name="Nakayama S."/>
            <person name="Nakazaki N."/>
            <person name="Shimpo S."/>
            <person name="Sugimoto M."/>
            <person name="Takeuchi C."/>
            <person name="Yamada M."/>
            <person name="Tabata S."/>
        </authorList>
    </citation>
    <scope>NUCLEOTIDE SEQUENCE [LARGE SCALE GENOMIC DNA]</scope>
    <source>
        <strain>LMG 29417 / CECT 9101 / MAFF 303099</strain>
    </source>
</reference>
<protein>
    <recommendedName>
        <fullName evidence="1">Methionine--tRNA ligase</fullName>
        <ecNumber evidence="1">6.1.1.10</ecNumber>
    </recommendedName>
    <alternativeName>
        <fullName evidence="1">Methionyl-tRNA synthetase</fullName>
        <shortName evidence="1">MetRS</shortName>
    </alternativeName>
</protein>
<name>SYM_RHILO</name>
<keyword id="KW-0030">Aminoacyl-tRNA synthetase</keyword>
<keyword id="KW-0067">ATP-binding</keyword>
<keyword id="KW-0963">Cytoplasm</keyword>
<keyword id="KW-0436">Ligase</keyword>
<keyword id="KW-0547">Nucleotide-binding</keyword>
<keyword id="KW-0648">Protein biosynthesis</keyword>
<accession>Q98MV8</accession>
<comment type="function">
    <text evidence="1">Is required not only for elongation of protein synthesis but also for the initiation of all mRNA translation through initiator tRNA(fMet) aminoacylation.</text>
</comment>
<comment type="catalytic activity">
    <reaction evidence="1">
        <text>tRNA(Met) + L-methionine + ATP = L-methionyl-tRNA(Met) + AMP + diphosphate</text>
        <dbReference type="Rhea" id="RHEA:13481"/>
        <dbReference type="Rhea" id="RHEA-COMP:9667"/>
        <dbReference type="Rhea" id="RHEA-COMP:9698"/>
        <dbReference type="ChEBI" id="CHEBI:30616"/>
        <dbReference type="ChEBI" id="CHEBI:33019"/>
        <dbReference type="ChEBI" id="CHEBI:57844"/>
        <dbReference type="ChEBI" id="CHEBI:78442"/>
        <dbReference type="ChEBI" id="CHEBI:78530"/>
        <dbReference type="ChEBI" id="CHEBI:456215"/>
        <dbReference type="EC" id="6.1.1.10"/>
    </reaction>
</comment>
<comment type="subunit">
    <text evidence="1">Monomer.</text>
</comment>
<comment type="subcellular location">
    <subcellularLocation>
        <location evidence="1">Cytoplasm</location>
    </subcellularLocation>
</comment>
<comment type="similarity">
    <text evidence="1">Belongs to the class-I aminoacyl-tRNA synthetase family. MetG type 2B subfamily.</text>
</comment>
<proteinExistence type="inferred from homology"/>
<organism>
    <name type="scientific">Mesorhizobium japonicum (strain LMG 29417 / CECT 9101 / MAFF 303099)</name>
    <name type="common">Mesorhizobium loti (strain MAFF 303099)</name>
    <dbReference type="NCBI Taxonomy" id="266835"/>
    <lineage>
        <taxon>Bacteria</taxon>
        <taxon>Pseudomonadati</taxon>
        <taxon>Pseudomonadota</taxon>
        <taxon>Alphaproteobacteria</taxon>
        <taxon>Hyphomicrobiales</taxon>
        <taxon>Phyllobacteriaceae</taxon>
        <taxon>Mesorhizobium</taxon>
    </lineage>
</organism>
<sequence length="516" mass="57525">MSREKYYLTTPIFYPNGKPHIGHAYTVIATDALARFQRLDGKDVFFLTGTDEHGLKMQQTAEKEGITPQALADRNSAIFRSMTEAVGGSNDEYIRTTEPRHYASCQAIWKAMAANGDIYLDRYSGWYSVRQEAYFDESETTLGEDGVRREPLGSPVEWNEEESYFFRLSAYQDKLLALYESQPDFVGPAERRNEVMSFVKSGLKDLSISRTTFKWGVPVPGDDKHVMYVWVDALTNYITAAGYPDTKSDQWRYWPATHIIGKDIVRFHAVYWPAFLMSAGIELPKRVFAHGFLFNRGEKMSKSVGNVVDPFALIEHYGLDQVRYFFLREVPFGQDGSYSHDAIVNRTNADLANGLGNLAQRSLSMIAKNCGGVVPKRGEMTDADSAILDQAVAALTTARKAMAGQGIHLALAAIFDVVAEADRYFAGQAPWALKKTDPERMETVLWTTAELVRRVAVLCQPFIPGSAAKLLDLLAVPADKRDFVHVHADYALVPGTALPAPEGVFPRYVEQPGANA</sequence>
<dbReference type="EC" id="6.1.1.10" evidence="1"/>
<dbReference type="EMBL" id="BA000012">
    <property type="protein sequence ID" value="BAB48005.1"/>
    <property type="molecule type" value="Genomic_DNA"/>
</dbReference>
<dbReference type="RefSeq" id="WP_010909361.1">
    <property type="nucleotide sequence ID" value="NC_002678.2"/>
</dbReference>
<dbReference type="SMR" id="Q98MV8"/>
<dbReference type="KEGG" id="mlo:mll0419"/>
<dbReference type="PATRIC" id="fig|266835.9.peg.335"/>
<dbReference type="eggNOG" id="COG0143">
    <property type="taxonomic scope" value="Bacteria"/>
</dbReference>
<dbReference type="HOGENOM" id="CLU_009710_9_3_5"/>
<dbReference type="Proteomes" id="UP000000552">
    <property type="component" value="Chromosome"/>
</dbReference>
<dbReference type="GO" id="GO:0005737">
    <property type="term" value="C:cytoplasm"/>
    <property type="evidence" value="ECO:0007669"/>
    <property type="project" value="UniProtKB-SubCell"/>
</dbReference>
<dbReference type="GO" id="GO:0005524">
    <property type="term" value="F:ATP binding"/>
    <property type="evidence" value="ECO:0007669"/>
    <property type="project" value="UniProtKB-UniRule"/>
</dbReference>
<dbReference type="GO" id="GO:0004825">
    <property type="term" value="F:methionine-tRNA ligase activity"/>
    <property type="evidence" value="ECO:0007669"/>
    <property type="project" value="UniProtKB-UniRule"/>
</dbReference>
<dbReference type="GO" id="GO:0006431">
    <property type="term" value="P:methionyl-tRNA aminoacylation"/>
    <property type="evidence" value="ECO:0007669"/>
    <property type="project" value="UniProtKB-UniRule"/>
</dbReference>
<dbReference type="CDD" id="cd07957">
    <property type="entry name" value="Anticodon_Ia_Met"/>
    <property type="match status" value="1"/>
</dbReference>
<dbReference type="CDD" id="cd00814">
    <property type="entry name" value="MetRS_core"/>
    <property type="match status" value="1"/>
</dbReference>
<dbReference type="FunFam" id="2.170.220.10:FF:000001">
    <property type="entry name" value="methionine--tRNA ligase, mitochondrial"/>
    <property type="match status" value="1"/>
</dbReference>
<dbReference type="Gene3D" id="2.170.220.10">
    <property type="match status" value="1"/>
</dbReference>
<dbReference type="Gene3D" id="3.40.50.620">
    <property type="entry name" value="HUPs"/>
    <property type="match status" value="1"/>
</dbReference>
<dbReference type="Gene3D" id="1.10.730.10">
    <property type="entry name" value="Isoleucyl-tRNA Synthetase, Domain 1"/>
    <property type="match status" value="1"/>
</dbReference>
<dbReference type="HAMAP" id="MF_01228">
    <property type="entry name" value="Met_tRNA_synth_type2"/>
    <property type="match status" value="1"/>
</dbReference>
<dbReference type="InterPro" id="IPR001412">
    <property type="entry name" value="aa-tRNA-synth_I_CS"/>
</dbReference>
<dbReference type="InterPro" id="IPR041872">
    <property type="entry name" value="Anticodon_Met"/>
</dbReference>
<dbReference type="InterPro" id="IPR014758">
    <property type="entry name" value="Met-tRNA_synth"/>
</dbReference>
<dbReference type="InterPro" id="IPR023457">
    <property type="entry name" value="Met-tRNA_synth_2"/>
</dbReference>
<dbReference type="InterPro" id="IPR015413">
    <property type="entry name" value="Methionyl/Leucyl_tRNA_Synth"/>
</dbReference>
<dbReference type="InterPro" id="IPR033911">
    <property type="entry name" value="MetRS_core"/>
</dbReference>
<dbReference type="InterPro" id="IPR014729">
    <property type="entry name" value="Rossmann-like_a/b/a_fold"/>
</dbReference>
<dbReference type="InterPro" id="IPR009080">
    <property type="entry name" value="tRNAsynth_Ia_anticodon-bd"/>
</dbReference>
<dbReference type="NCBIfam" id="TIGR00398">
    <property type="entry name" value="metG"/>
    <property type="match status" value="1"/>
</dbReference>
<dbReference type="NCBIfam" id="NF008900">
    <property type="entry name" value="PRK12267.1"/>
    <property type="match status" value="1"/>
</dbReference>
<dbReference type="PANTHER" id="PTHR43326:SF1">
    <property type="entry name" value="METHIONINE--TRNA LIGASE, MITOCHONDRIAL"/>
    <property type="match status" value="1"/>
</dbReference>
<dbReference type="PANTHER" id="PTHR43326">
    <property type="entry name" value="METHIONYL-TRNA SYNTHETASE"/>
    <property type="match status" value="1"/>
</dbReference>
<dbReference type="Pfam" id="PF19303">
    <property type="entry name" value="Anticodon_3"/>
    <property type="match status" value="1"/>
</dbReference>
<dbReference type="Pfam" id="PF09334">
    <property type="entry name" value="tRNA-synt_1g"/>
    <property type="match status" value="2"/>
</dbReference>
<dbReference type="PRINTS" id="PR01041">
    <property type="entry name" value="TRNASYNTHMET"/>
</dbReference>
<dbReference type="SUPFAM" id="SSF47323">
    <property type="entry name" value="Anticodon-binding domain of a subclass of class I aminoacyl-tRNA synthetases"/>
    <property type="match status" value="1"/>
</dbReference>
<dbReference type="SUPFAM" id="SSF52374">
    <property type="entry name" value="Nucleotidylyl transferase"/>
    <property type="match status" value="1"/>
</dbReference>
<dbReference type="PROSITE" id="PS00178">
    <property type="entry name" value="AA_TRNA_LIGASE_I"/>
    <property type="match status" value="1"/>
</dbReference>
<feature type="chain" id="PRO_0000139235" description="Methionine--tRNA ligase">
    <location>
        <begin position="1"/>
        <end position="516"/>
    </location>
</feature>
<feature type="short sequence motif" description="'HIGH' region">
    <location>
        <begin position="13"/>
        <end position="23"/>
    </location>
</feature>
<feature type="short sequence motif" description="'KMSKS' region">
    <location>
        <begin position="299"/>
        <end position="303"/>
    </location>
</feature>
<feature type="binding site" evidence="1">
    <location>
        <position position="302"/>
    </location>
    <ligand>
        <name>ATP</name>
        <dbReference type="ChEBI" id="CHEBI:30616"/>
    </ligand>
</feature>
<gene>
    <name evidence="1" type="primary">metG</name>
    <name type="ordered locus">mll0419</name>
</gene>
<evidence type="ECO:0000255" key="1">
    <source>
        <dbReference type="HAMAP-Rule" id="MF_01228"/>
    </source>
</evidence>